<feature type="chain" id="PRO_0000187655" description="Uroporphyrinogen decarboxylase">
    <location>
        <begin position="1"/>
        <end position="385"/>
    </location>
</feature>
<feature type="binding site" evidence="1">
    <location>
        <begin position="53"/>
        <end position="57"/>
    </location>
    <ligand>
        <name>substrate</name>
    </ligand>
</feature>
<feature type="binding site" evidence="1">
    <location>
        <position position="102"/>
    </location>
    <ligand>
        <name>substrate</name>
    </ligand>
</feature>
<feature type="binding site" evidence="1">
    <location>
        <position position="179"/>
    </location>
    <ligand>
        <name>substrate</name>
    </ligand>
</feature>
<feature type="binding site" evidence="1">
    <location>
        <position position="234"/>
    </location>
    <ligand>
        <name>substrate</name>
    </ligand>
</feature>
<feature type="binding site" evidence="1">
    <location>
        <position position="363"/>
    </location>
    <ligand>
        <name>substrate</name>
    </ligand>
</feature>
<feature type="site" description="Transition state stabilizer" evidence="1">
    <location>
        <position position="102"/>
    </location>
</feature>
<reference key="1">
    <citation type="journal article" date="2003" name="Genome Res.">
        <title>Tropheryma whipplei twist: a human pathogenic Actinobacteria with a reduced genome.</title>
        <authorList>
            <person name="Raoult D."/>
            <person name="Ogata H."/>
            <person name="Audic S."/>
            <person name="Robert C."/>
            <person name="Suhre K."/>
            <person name="Drancourt M."/>
            <person name="Claverie J.-M."/>
        </authorList>
    </citation>
    <scope>NUCLEOTIDE SEQUENCE [LARGE SCALE GENOMIC DNA]</scope>
    <source>
        <strain>Twist</strain>
    </source>
</reference>
<gene>
    <name evidence="1" type="primary">hemE</name>
    <name type="ordered locus">TWT_735</name>
</gene>
<accession>Q83FJ0</accession>
<sequence length="385" mass="41233">MTGASGVEGTRIPLHSLSCRPSAGRSAGSFVNTGIMEAFRGTRPGCLPVWFMRQAGRSLPEYRAVRGTNTLLEACLNPDLACEITLQPVRRYSVDAAILFSDIVVPLKLAGVGVDILPGTGPVLNNPIDTPDRVNTLLAKTADSIDFGIIAEITRHTVSVLNGIPLIGFAGAPYTLACYMVEGGPSKTHMKARAMMHGDKKTWQKVMMLAARLSGQFLAAQITSGAQAVQIFDSWAGSLSRKDYVDNVAPFSKMTIDLACGIDGNSDLSKTGKSLWPRVPVLHFAANAGHLLTAIRDIGVSVMSVDYTKPLDEASELLDDSMPLQGNIDPAMLFAPWEVLKRHVLDIVQRASRAPSHVLNLGHGVPPDASCDQLARIVDLAHSMV</sequence>
<dbReference type="EC" id="4.1.1.37" evidence="1"/>
<dbReference type="EMBL" id="AE014184">
    <property type="protein sequence ID" value="AAO44832.1"/>
    <property type="molecule type" value="Genomic_DNA"/>
</dbReference>
<dbReference type="SMR" id="Q83FJ0"/>
<dbReference type="STRING" id="203267.TWT_735"/>
<dbReference type="KEGG" id="twh:TWT_735"/>
<dbReference type="eggNOG" id="COG0407">
    <property type="taxonomic scope" value="Bacteria"/>
</dbReference>
<dbReference type="HOGENOM" id="CLU_040933_0_1_11"/>
<dbReference type="OrthoDB" id="9806656at2"/>
<dbReference type="UniPathway" id="UPA00251">
    <property type="reaction ID" value="UER00321"/>
</dbReference>
<dbReference type="Proteomes" id="UP000002200">
    <property type="component" value="Chromosome"/>
</dbReference>
<dbReference type="GO" id="GO:0005829">
    <property type="term" value="C:cytosol"/>
    <property type="evidence" value="ECO:0007669"/>
    <property type="project" value="TreeGrafter"/>
</dbReference>
<dbReference type="GO" id="GO:0004853">
    <property type="term" value="F:uroporphyrinogen decarboxylase activity"/>
    <property type="evidence" value="ECO:0007669"/>
    <property type="project" value="UniProtKB-UniRule"/>
</dbReference>
<dbReference type="GO" id="GO:0006782">
    <property type="term" value="P:protoporphyrinogen IX biosynthetic process"/>
    <property type="evidence" value="ECO:0007669"/>
    <property type="project" value="UniProtKB-UniRule"/>
</dbReference>
<dbReference type="CDD" id="cd00717">
    <property type="entry name" value="URO-D"/>
    <property type="match status" value="1"/>
</dbReference>
<dbReference type="Gene3D" id="3.20.20.210">
    <property type="match status" value="1"/>
</dbReference>
<dbReference type="HAMAP" id="MF_00218">
    <property type="entry name" value="URO_D"/>
    <property type="match status" value="1"/>
</dbReference>
<dbReference type="InterPro" id="IPR038071">
    <property type="entry name" value="UROD/MetE-like_sf"/>
</dbReference>
<dbReference type="InterPro" id="IPR006361">
    <property type="entry name" value="Uroporphyrinogen_deCO2ase_HemE"/>
</dbReference>
<dbReference type="InterPro" id="IPR000257">
    <property type="entry name" value="Uroporphyrinogen_deCOase"/>
</dbReference>
<dbReference type="NCBIfam" id="TIGR01464">
    <property type="entry name" value="hemE"/>
    <property type="match status" value="1"/>
</dbReference>
<dbReference type="PANTHER" id="PTHR21091">
    <property type="entry name" value="METHYLTETRAHYDROFOLATE:HOMOCYSTEINE METHYLTRANSFERASE RELATED"/>
    <property type="match status" value="1"/>
</dbReference>
<dbReference type="PANTHER" id="PTHR21091:SF169">
    <property type="entry name" value="UROPORPHYRINOGEN DECARBOXYLASE"/>
    <property type="match status" value="1"/>
</dbReference>
<dbReference type="Pfam" id="PF01208">
    <property type="entry name" value="URO-D"/>
    <property type="match status" value="1"/>
</dbReference>
<dbReference type="SUPFAM" id="SSF51726">
    <property type="entry name" value="UROD/MetE-like"/>
    <property type="match status" value="1"/>
</dbReference>
<dbReference type="PROSITE" id="PS00906">
    <property type="entry name" value="UROD_1"/>
    <property type="match status" value="1"/>
</dbReference>
<dbReference type="PROSITE" id="PS00907">
    <property type="entry name" value="UROD_2"/>
    <property type="match status" value="1"/>
</dbReference>
<name>DCUP_TROWT</name>
<comment type="function">
    <text evidence="1">Catalyzes the decarboxylation of four acetate groups of uroporphyrinogen-III to yield coproporphyrinogen-III.</text>
</comment>
<comment type="catalytic activity">
    <reaction evidence="1">
        <text>uroporphyrinogen III + 4 H(+) = coproporphyrinogen III + 4 CO2</text>
        <dbReference type="Rhea" id="RHEA:19865"/>
        <dbReference type="ChEBI" id="CHEBI:15378"/>
        <dbReference type="ChEBI" id="CHEBI:16526"/>
        <dbReference type="ChEBI" id="CHEBI:57308"/>
        <dbReference type="ChEBI" id="CHEBI:57309"/>
        <dbReference type="EC" id="4.1.1.37"/>
    </reaction>
</comment>
<comment type="pathway">
    <text evidence="1">Porphyrin-containing compound metabolism; protoporphyrin-IX biosynthesis; coproporphyrinogen-III from 5-aminolevulinate: step 4/4.</text>
</comment>
<comment type="subunit">
    <text evidence="1">Homodimer.</text>
</comment>
<comment type="subcellular location">
    <subcellularLocation>
        <location evidence="1">Cytoplasm</location>
    </subcellularLocation>
</comment>
<comment type="similarity">
    <text evidence="1">Belongs to the uroporphyrinogen decarboxylase family.</text>
</comment>
<proteinExistence type="inferred from homology"/>
<keyword id="KW-0963">Cytoplasm</keyword>
<keyword id="KW-0210">Decarboxylase</keyword>
<keyword id="KW-0456">Lyase</keyword>
<keyword id="KW-0627">Porphyrin biosynthesis</keyword>
<keyword id="KW-1185">Reference proteome</keyword>
<protein>
    <recommendedName>
        <fullName evidence="1">Uroporphyrinogen decarboxylase</fullName>
        <shortName evidence="1">UPD</shortName>
        <shortName evidence="1">URO-D</shortName>
        <ecNumber evidence="1">4.1.1.37</ecNumber>
    </recommendedName>
</protein>
<organism>
    <name type="scientific">Tropheryma whipplei (strain Twist)</name>
    <name type="common">Whipple's bacillus</name>
    <dbReference type="NCBI Taxonomy" id="203267"/>
    <lineage>
        <taxon>Bacteria</taxon>
        <taxon>Bacillati</taxon>
        <taxon>Actinomycetota</taxon>
        <taxon>Actinomycetes</taxon>
        <taxon>Micrococcales</taxon>
        <taxon>Tropherymataceae</taxon>
        <taxon>Tropheryma</taxon>
    </lineage>
</organism>
<evidence type="ECO:0000255" key="1">
    <source>
        <dbReference type="HAMAP-Rule" id="MF_00218"/>
    </source>
</evidence>